<name>SYL_BIFLD</name>
<protein>
    <recommendedName>
        <fullName evidence="1">Leucine--tRNA ligase</fullName>
        <ecNumber evidence="1">6.1.1.4</ecNumber>
    </recommendedName>
    <alternativeName>
        <fullName evidence="1">Leucyl-tRNA synthetase</fullName>
        <shortName evidence="1">LeuRS</shortName>
    </alternativeName>
</protein>
<reference key="1">
    <citation type="journal article" date="2008" name="BMC Genomics">
        <title>Comparative genomic analysis of the gut bacterium Bifidobacterium longum reveals loci susceptible to deletion during pure culture growth.</title>
        <authorList>
            <person name="Lee J.H."/>
            <person name="Karamychev V.N."/>
            <person name="Kozyavkin S.A."/>
            <person name="Mills D."/>
            <person name="Pavlov A.R."/>
            <person name="Pavlova N.V."/>
            <person name="Polouchine N.N."/>
            <person name="Richardson P.M."/>
            <person name="Shakhova V.V."/>
            <person name="Slesarev A.I."/>
            <person name="Weimer B."/>
            <person name="O'Sullivan D.J."/>
        </authorList>
    </citation>
    <scope>NUCLEOTIDE SEQUENCE [LARGE SCALE GENOMIC DNA]</scope>
    <source>
        <strain>DJO10A</strain>
    </source>
</reference>
<organism>
    <name type="scientific">Bifidobacterium longum (strain DJO10A)</name>
    <dbReference type="NCBI Taxonomy" id="205913"/>
    <lineage>
        <taxon>Bacteria</taxon>
        <taxon>Bacillati</taxon>
        <taxon>Actinomycetota</taxon>
        <taxon>Actinomycetes</taxon>
        <taxon>Bifidobacteriales</taxon>
        <taxon>Bifidobacteriaceae</taxon>
        <taxon>Bifidobacterium</taxon>
    </lineage>
</organism>
<comment type="catalytic activity">
    <reaction evidence="1">
        <text>tRNA(Leu) + L-leucine + ATP = L-leucyl-tRNA(Leu) + AMP + diphosphate</text>
        <dbReference type="Rhea" id="RHEA:11688"/>
        <dbReference type="Rhea" id="RHEA-COMP:9613"/>
        <dbReference type="Rhea" id="RHEA-COMP:9622"/>
        <dbReference type="ChEBI" id="CHEBI:30616"/>
        <dbReference type="ChEBI" id="CHEBI:33019"/>
        <dbReference type="ChEBI" id="CHEBI:57427"/>
        <dbReference type="ChEBI" id="CHEBI:78442"/>
        <dbReference type="ChEBI" id="CHEBI:78494"/>
        <dbReference type="ChEBI" id="CHEBI:456215"/>
        <dbReference type="EC" id="6.1.1.4"/>
    </reaction>
</comment>
<comment type="subcellular location">
    <subcellularLocation>
        <location evidence="1">Cytoplasm</location>
    </subcellularLocation>
</comment>
<comment type="similarity">
    <text evidence="1">Belongs to the class-I aminoacyl-tRNA synthetase family.</text>
</comment>
<accession>B3DRD0</accession>
<evidence type="ECO:0000255" key="1">
    <source>
        <dbReference type="HAMAP-Rule" id="MF_00049"/>
    </source>
</evidence>
<dbReference type="EC" id="6.1.1.4" evidence="1"/>
<dbReference type="EMBL" id="CP000605">
    <property type="protein sequence ID" value="ACD97774.1"/>
    <property type="molecule type" value="Genomic_DNA"/>
</dbReference>
<dbReference type="RefSeq" id="WP_010080746.1">
    <property type="nucleotide sequence ID" value="NZ_AABM02000001.1"/>
</dbReference>
<dbReference type="SMR" id="B3DRD0"/>
<dbReference type="GeneID" id="69578373"/>
<dbReference type="KEGG" id="blj:BLD_0328"/>
<dbReference type="HOGENOM" id="CLU_004427_0_0_11"/>
<dbReference type="Proteomes" id="UP000002419">
    <property type="component" value="Chromosome"/>
</dbReference>
<dbReference type="GO" id="GO:0005829">
    <property type="term" value="C:cytosol"/>
    <property type="evidence" value="ECO:0007669"/>
    <property type="project" value="TreeGrafter"/>
</dbReference>
<dbReference type="GO" id="GO:0002161">
    <property type="term" value="F:aminoacyl-tRNA deacylase activity"/>
    <property type="evidence" value="ECO:0007669"/>
    <property type="project" value="InterPro"/>
</dbReference>
<dbReference type="GO" id="GO:0005524">
    <property type="term" value="F:ATP binding"/>
    <property type="evidence" value="ECO:0007669"/>
    <property type="project" value="UniProtKB-UniRule"/>
</dbReference>
<dbReference type="GO" id="GO:0004823">
    <property type="term" value="F:leucine-tRNA ligase activity"/>
    <property type="evidence" value="ECO:0007669"/>
    <property type="project" value="UniProtKB-UniRule"/>
</dbReference>
<dbReference type="GO" id="GO:0006429">
    <property type="term" value="P:leucyl-tRNA aminoacylation"/>
    <property type="evidence" value="ECO:0007669"/>
    <property type="project" value="UniProtKB-UniRule"/>
</dbReference>
<dbReference type="CDD" id="cd07958">
    <property type="entry name" value="Anticodon_Ia_Leu_BEm"/>
    <property type="match status" value="1"/>
</dbReference>
<dbReference type="FunFam" id="3.40.50.620:FF:000056">
    <property type="entry name" value="Leucine--tRNA ligase"/>
    <property type="match status" value="1"/>
</dbReference>
<dbReference type="FunFam" id="3.40.50.620:FF:000060">
    <property type="entry name" value="Leucine--tRNA ligase"/>
    <property type="match status" value="1"/>
</dbReference>
<dbReference type="FunFam" id="3.40.50.620:FF:000087">
    <property type="entry name" value="Leucine--tRNA ligase"/>
    <property type="match status" value="1"/>
</dbReference>
<dbReference type="FunFam" id="1.10.730.10:FF:000011">
    <property type="entry name" value="Leucine--tRNA ligase chloroplastic/mitochondrial"/>
    <property type="match status" value="1"/>
</dbReference>
<dbReference type="Gene3D" id="3.40.50.620">
    <property type="entry name" value="HUPs"/>
    <property type="match status" value="3"/>
</dbReference>
<dbReference type="Gene3D" id="1.10.730.10">
    <property type="entry name" value="Isoleucyl-tRNA Synthetase, Domain 1"/>
    <property type="match status" value="2"/>
</dbReference>
<dbReference type="Gene3D" id="3.90.740.10">
    <property type="entry name" value="Valyl/Leucyl/Isoleucyl-tRNA synthetase, editing domain"/>
    <property type="match status" value="1"/>
</dbReference>
<dbReference type="HAMAP" id="MF_00049_B">
    <property type="entry name" value="Leu_tRNA_synth_B"/>
    <property type="match status" value="1"/>
</dbReference>
<dbReference type="InterPro" id="IPR001412">
    <property type="entry name" value="aa-tRNA-synth_I_CS"/>
</dbReference>
<dbReference type="InterPro" id="IPR002302">
    <property type="entry name" value="Leu-tRNA-ligase"/>
</dbReference>
<dbReference type="InterPro" id="IPR025709">
    <property type="entry name" value="Leu_tRNA-synth_edit"/>
</dbReference>
<dbReference type="InterPro" id="IPR013155">
    <property type="entry name" value="M/V/L/I-tRNA-synth_anticd-bd"/>
</dbReference>
<dbReference type="InterPro" id="IPR015413">
    <property type="entry name" value="Methionyl/Leucyl_tRNA_Synth"/>
</dbReference>
<dbReference type="InterPro" id="IPR014729">
    <property type="entry name" value="Rossmann-like_a/b/a_fold"/>
</dbReference>
<dbReference type="InterPro" id="IPR009080">
    <property type="entry name" value="tRNAsynth_Ia_anticodon-bd"/>
</dbReference>
<dbReference type="InterPro" id="IPR009008">
    <property type="entry name" value="Val/Leu/Ile-tRNA-synth_edit"/>
</dbReference>
<dbReference type="NCBIfam" id="TIGR00396">
    <property type="entry name" value="leuS_bact"/>
    <property type="match status" value="1"/>
</dbReference>
<dbReference type="PANTHER" id="PTHR43740:SF2">
    <property type="entry name" value="LEUCINE--TRNA LIGASE, MITOCHONDRIAL"/>
    <property type="match status" value="1"/>
</dbReference>
<dbReference type="PANTHER" id="PTHR43740">
    <property type="entry name" value="LEUCYL-TRNA SYNTHETASE"/>
    <property type="match status" value="1"/>
</dbReference>
<dbReference type="Pfam" id="PF08264">
    <property type="entry name" value="Anticodon_1"/>
    <property type="match status" value="1"/>
</dbReference>
<dbReference type="Pfam" id="PF13603">
    <property type="entry name" value="tRNA-synt_1_2"/>
    <property type="match status" value="1"/>
</dbReference>
<dbReference type="Pfam" id="PF09334">
    <property type="entry name" value="tRNA-synt_1g"/>
    <property type="match status" value="1"/>
</dbReference>
<dbReference type="PRINTS" id="PR00985">
    <property type="entry name" value="TRNASYNTHLEU"/>
</dbReference>
<dbReference type="SUPFAM" id="SSF47323">
    <property type="entry name" value="Anticodon-binding domain of a subclass of class I aminoacyl-tRNA synthetases"/>
    <property type="match status" value="1"/>
</dbReference>
<dbReference type="SUPFAM" id="SSF52374">
    <property type="entry name" value="Nucleotidylyl transferase"/>
    <property type="match status" value="1"/>
</dbReference>
<dbReference type="SUPFAM" id="SSF50677">
    <property type="entry name" value="ValRS/IleRS/LeuRS editing domain"/>
    <property type="match status" value="1"/>
</dbReference>
<dbReference type="PROSITE" id="PS00178">
    <property type="entry name" value="AA_TRNA_LIGASE_I"/>
    <property type="match status" value="1"/>
</dbReference>
<proteinExistence type="inferred from homology"/>
<keyword id="KW-0030">Aminoacyl-tRNA synthetase</keyword>
<keyword id="KW-0067">ATP-binding</keyword>
<keyword id="KW-0963">Cytoplasm</keyword>
<keyword id="KW-0436">Ligase</keyword>
<keyword id="KW-0547">Nucleotide-binding</keyword>
<keyword id="KW-0648">Protein biosynthesis</keyword>
<feature type="chain" id="PRO_1000091291" description="Leucine--tRNA ligase">
    <location>
        <begin position="1"/>
        <end position="987"/>
    </location>
</feature>
<feature type="short sequence motif" description="'HIGH' region">
    <location>
        <begin position="69"/>
        <end position="80"/>
    </location>
</feature>
<feature type="short sequence motif" description="'KMSKS' region">
    <location>
        <begin position="760"/>
        <end position="764"/>
    </location>
</feature>
<feature type="binding site" evidence="1">
    <location>
        <position position="763"/>
    </location>
    <ligand>
        <name>ATP</name>
        <dbReference type="ChEBI" id="CHEBI:30616"/>
    </ligand>
</feature>
<sequence>MSDNEKSTQTEEPNFRYNAALAQDIENKWQKIWDEQGTFWAANVNGDLKDGKGRNAEGRTAYFAMDMFPYPSGKGLHVGHPLGYLASDVVSRYHRMKGENVLHAMGYDAFGLPAEQYAVQTGQHPRVTTEANIANMSRQLHRMGLSFDNRRTFATIDPGYVRWTQWIFSRIYDSWYDEDATNPSGSKGSARPIAELVAKFESGEKAIPGHESDGKQWSDLTDAEQQDILNDFRLAYISKSPVNWCPGLGTVLANEEVTAEGKSERGNFPVFQRELRQWSMRITKYGHRLIADLDGINWPEKVKLMQRNWIGESHGASVHFTVATADGDKDMEIYTTRPDTLFGTTFAVVSPEHHLLENVPAEWPADVPEDWKGGYANPVEAVKAYRLAAEAKTAKDRVNEAGEKTGLFTGLYATNPITGAKLPLFTADYVLMDYGTGAIMAVPGGDQRDYDFAVKFGLPVIYTVTPLPDSGDDLANYEGKAPFVSHDGIVINSSVEATEAKGDALSLNGLRVDDAIAKVNAWLESAGVGKGTVSYRLRDWLFSRQRYWGEPFPIVYGEDGTPHLLPDSALPINLPDVPDYEPRTFDPMDAESNPEAPLSRNEDWVKVELDLGDGKKTYYRDTNTMPNWAGSCWYYMRYIDPTDTKHMVEKDEFDYWMGPNHNKYSGDEGGVDLYIGGVEHAVLHLLYSRFWHKVLFDLGYVDSAEPFHKLFNQGMIQAYAYTDDRGQYVPADEVVEGPADASGEPTFTWNGEHANREFGKMGKSLKNIVTPDYMYENYGADTFRLYEMSMGPLDESRPWNTRNVVGGMRFLQRLWRNVVDETTGQAHVTEDTPDEKTLKLLNNTIAEVTAEMEGMRPNTAIAKLIVLNNHLTGLKAVPRAAVEPLILMLAPIAPHICEEMWSKLGHAESLSAEPWPVADERYVGHDTVTAVVQIKGKVRAKLEVPVDIDPADLEKQALAAVADRLGGKEPRKVIVKAPKIVSIVPAE</sequence>
<gene>
    <name evidence="1" type="primary">leuS</name>
    <name type="ordered locus">BLD_0328</name>
</gene>